<feature type="chain" id="PRO_0000137640" description="Small ribosomal subunit protein eS24">
    <location>
        <begin position="1"/>
        <end position="102"/>
    </location>
</feature>
<gene>
    <name type="primary">rps24e</name>
    <name type="ordered locus">rrnAC2488</name>
</gene>
<proteinExistence type="evidence at protein level"/>
<comment type="similarity">
    <text evidence="1">Belongs to the eukaryotic ribosomal protein eS24 family.</text>
</comment>
<name>RS24_HALMA</name>
<organism>
    <name type="scientific">Haloarcula marismortui (strain ATCC 43049 / DSM 3752 / JCM 8966 / VKM B-1809)</name>
    <name type="common">Halobacterium marismortui</name>
    <dbReference type="NCBI Taxonomy" id="272569"/>
    <lineage>
        <taxon>Archaea</taxon>
        <taxon>Methanobacteriati</taxon>
        <taxon>Methanobacteriota</taxon>
        <taxon>Stenosarchaea group</taxon>
        <taxon>Halobacteria</taxon>
        <taxon>Halobacteriales</taxon>
        <taxon>Haloarculaceae</taxon>
        <taxon>Haloarcula</taxon>
    </lineage>
</organism>
<sequence>MDIDIIEEDENPMLHRTDVRFEVVHDEATPSRLSVRDSLAATLNKDAEEVVIHKLDTKFGMRKTVGYAKVYDNPEYARDVEQDHMLERNKIVADGEEEAEEA</sequence>
<evidence type="ECO:0000305" key="1"/>
<dbReference type="EMBL" id="X70117">
    <property type="protein sequence ID" value="CAA49707.1"/>
    <property type="molecule type" value="Genomic_DNA"/>
</dbReference>
<dbReference type="EMBL" id="AY596297">
    <property type="protein sequence ID" value="AAV47293.1"/>
    <property type="molecule type" value="Genomic_DNA"/>
</dbReference>
<dbReference type="PIR" id="S27035">
    <property type="entry name" value="R3HS15"/>
</dbReference>
<dbReference type="RefSeq" id="WP_004516108.1">
    <property type="nucleotide sequence ID" value="NZ_CP039138.1"/>
</dbReference>
<dbReference type="SMR" id="P19953"/>
<dbReference type="STRING" id="272569.rrnAC2488"/>
<dbReference type="PaxDb" id="272569-rrnAC2488"/>
<dbReference type="EnsemblBacteria" id="AAV47293">
    <property type="protein sequence ID" value="AAV47293"/>
    <property type="gene ID" value="rrnAC2488"/>
</dbReference>
<dbReference type="KEGG" id="hma:rrnAC2488"/>
<dbReference type="PATRIC" id="fig|272569.17.peg.3098"/>
<dbReference type="eggNOG" id="arCOG04182">
    <property type="taxonomic scope" value="Archaea"/>
</dbReference>
<dbReference type="HOGENOM" id="CLU_107248_3_1_2"/>
<dbReference type="Proteomes" id="UP000001169">
    <property type="component" value="Chromosome I"/>
</dbReference>
<dbReference type="GO" id="GO:1990904">
    <property type="term" value="C:ribonucleoprotein complex"/>
    <property type="evidence" value="ECO:0007669"/>
    <property type="project" value="UniProtKB-KW"/>
</dbReference>
<dbReference type="GO" id="GO:0005840">
    <property type="term" value="C:ribosome"/>
    <property type="evidence" value="ECO:0007669"/>
    <property type="project" value="UniProtKB-KW"/>
</dbReference>
<dbReference type="GO" id="GO:0003735">
    <property type="term" value="F:structural constituent of ribosome"/>
    <property type="evidence" value="ECO:0007669"/>
    <property type="project" value="InterPro"/>
</dbReference>
<dbReference type="GO" id="GO:0006412">
    <property type="term" value="P:translation"/>
    <property type="evidence" value="ECO:0007669"/>
    <property type="project" value="UniProtKB-UniRule"/>
</dbReference>
<dbReference type="Gene3D" id="3.30.70.330">
    <property type="match status" value="1"/>
</dbReference>
<dbReference type="HAMAP" id="MF_00545">
    <property type="entry name" value="Ribosomal_eS24"/>
    <property type="match status" value="1"/>
</dbReference>
<dbReference type="InterPro" id="IPR012677">
    <property type="entry name" value="Nucleotide-bd_a/b_plait_sf"/>
</dbReference>
<dbReference type="InterPro" id="IPR001976">
    <property type="entry name" value="Ribosomal_eS24"/>
</dbReference>
<dbReference type="InterPro" id="IPR018098">
    <property type="entry name" value="Ribosomal_eS24_CS"/>
</dbReference>
<dbReference type="InterPro" id="IPR012678">
    <property type="entry name" value="Ribosomal_uL23/eL15/eS24_sf"/>
</dbReference>
<dbReference type="PANTHER" id="PTHR10496">
    <property type="entry name" value="40S RIBOSOMAL PROTEIN S24"/>
    <property type="match status" value="1"/>
</dbReference>
<dbReference type="Pfam" id="PF01282">
    <property type="entry name" value="Ribosomal_S24e"/>
    <property type="match status" value="1"/>
</dbReference>
<dbReference type="SUPFAM" id="SSF54189">
    <property type="entry name" value="Ribosomal proteins S24e, L23 and L15e"/>
    <property type="match status" value="1"/>
</dbReference>
<dbReference type="PROSITE" id="PS00529">
    <property type="entry name" value="RIBOSOMAL_S24E"/>
    <property type="match status" value="1"/>
</dbReference>
<reference key="1">
    <citation type="journal article" date="1992" name="FEBS Lett.">
        <title>Nucleotide sequence of the genes for ribosomal proteins HS15 and HSH from Haloarcula marismortui: an archaeon-specific gene cluster.</title>
        <authorList>
            <person name="Arndt E."/>
            <person name="Steffens C."/>
        </authorList>
    </citation>
    <scope>NUCLEOTIDE SEQUENCE [GENOMIC DNA]</scope>
</reference>
<reference key="2">
    <citation type="journal article" date="1987" name="FEBS Lett.">
        <title>Primary structures of three highly acidic ribosomal proteins S6, S12 and S15 from the archaebacterium Halobacterium marismortui.</title>
        <authorList>
            <person name="Kimura J."/>
            <person name="Arndt E."/>
            <person name="Kimura M."/>
        </authorList>
    </citation>
    <scope>PROTEIN SEQUENCE</scope>
</reference>
<reference key="3">
    <citation type="journal article" date="2004" name="Genome Res.">
        <title>Genome sequence of Haloarcula marismortui: a halophilic archaeon from the Dead Sea.</title>
        <authorList>
            <person name="Baliga N.S."/>
            <person name="Bonneau R."/>
            <person name="Facciotti M.T."/>
            <person name="Pan M."/>
            <person name="Glusman G."/>
            <person name="Deutsch E.W."/>
            <person name="Shannon P."/>
            <person name="Chiu Y."/>
            <person name="Weng R.S."/>
            <person name="Gan R.R."/>
            <person name="Hung P."/>
            <person name="Date S.V."/>
            <person name="Marcotte E."/>
            <person name="Hood L."/>
            <person name="Ng W.V."/>
        </authorList>
    </citation>
    <scope>NUCLEOTIDE SEQUENCE [LARGE SCALE GENOMIC DNA]</scope>
    <source>
        <strain>ATCC 43049 / DSM 3752 / JCM 8966 / VKM B-1809</strain>
    </source>
</reference>
<reference key="4">
    <citation type="journal article" date="1986" name="FEBS Lett.">
        <title>Purification and characterization of ribosomal proteins from the 30S subunit of the extreme halophile Halobacterium marismortui.</title>
        <authorList>
            <person name="Shoham M."/>
            <person name="Dijk J."/>
            <person name="Reinhardt R."/>
            <person name="Wittmann-Liebold B."/>
        </authorList>
    </citation>
    <scope>PROTEIN SEQUENCE OF 1-29</scope>
</reference>
<protein>
    <recommendedName>
        <fullName evidence="1">Small ribosomal subunit protein eS24</fullName>
    </recommendedName>
    <alternativeName>
        <fullName>30S ribosomal protein S24e</fullName>
    </alternativeName>
    <alternativeName>
        <fullName>E1.2</fullName>
    </alternativeName>
    <alternativeName>
        <fullName>HS15</fullName>
    </alternativeName>
</protein>
<accession>P19953</accession>
<accession>Q5UZL0</accession>
<keyword id="KW-0903">Direct protein sequencing</keyword>
<keyword id="KW-1185">Reference proteome</keyword>
<keyword id="KW-0687">Ribonucleoprotein</keyword>
<keyword id="KW-0689">Ribosomal protein</keyword>